<accession>A9W0N8</accession>
<proteinExistence type="inferred from homology"/>
<organism>
    <name type="scientific">Methylorubrum extorquens (strain PA1)</name>
    <name type="common">Methylobacterium extorquens</name>
    <dbReference type="NCBI Taxonomy" id="419610"/>
    <lineage>
        <taxon>Bacteria</taxon>
        <taxon>Pseudomonadati</taxon>
        <taxon>Pseudomonadota</taxon>
        <taxon>Alphaproteobacteria</taxon>
        <taxon>Hyphomicrobiales</taxon>
        <taxon>Methylobacteriaceae</taxon>
        <taxon>Methylorubrum</taxon>
    </lineage>
</organism>
<gene>
    <name evidence="1" type="primary">tsaD</name>
    <name type="synonym">gcp</name>
    <name type="ordered locus">Mext_0732</name>
</gene>
<sequence length="347" mass="35879">MKILGIETTCDETAAAVVTLGEDERGQILANEVLSQIAEHAAYGGVVPEIAARAHVEVLDRLIARALQRAGTTLKEIDGIAVAAGPGLIGGVLIGLVTAKTLALVARKPLLAVNHLEAHALTPRLTDGLAFPYLLLLASGGHTQLVAVKGVGDYVRLGTTIDDAIGEAFDKVAKLLGLGYPGGPEVERQAESGNPERFALPRPMIGRRQADFSLSGLKTALRIEAERLEPLASQDVADLCASFQAAVVDVVVDRVRVALRAFAGVAGHPTALVAAGGVAANGAIRRALAAQAGEVGLSFVAPPLPLCGDNGAMIAWAGLERLRLGLVDDLTVPARARWPFAEVAPAA</sequence>
<keyword id="KW-0012">Acyltransferase</keyword>
<keyword id="KW-0963">Cytoplasm</keyword>
<keyword id="KW-0408">Iron</keyword>
<keyword id="KW-0479">Metal-binding</keyword>
<keyword id="KW-0808">Transferase</keyword>
<keyword id="KW-0819">tRNA processing</keyword>
<protein>
    <recommendedName>
        <fullName evidence="1">tRNA N6-adenosine threonylcarbamoyltransferase</fullName>
        <ecNumber evidence="1">2.3.1.234</ecNumber>
    </recommendedName>
    <alternativeName>
        <fullName evidence="1">N6-L-threonylcarbamoyladenine synthase</fullName>
        <shortName evidence="1">t(6)A synthase</shortName>
    </alternativeName>
    <alternativeName>
        <fullName evidence="1">t(6)A37 threonylcarbamoyladenosine biosynthesis protein TsaD</fullName>
    </alternativeName>
    <alternativeName>
        <fullName evidence="1">tRNA threonylcarbamoyladenosine biosynthesis protein TsaD</fullName>
    </alternativeName>
</protein>
<feature type="chain" id="PRO_1000145994" description="tRNA N6-adenosine threonylcarbamoyltransferase">
    <location>
        <begin position="1"/>
        <end position="347"/>
    </location>
</feature>
<feature type="binding site" evidence="1">
    <location>
        <position position="115"/>
    </location>
    <ligand>
        <name>Fe cation</name>
        <dbReference type="ChEBI" id="CHEBI:24875"/>
    </ligand>
</feature>
<feature type="binding site" evidence="1">
    <location>
        <position position="119"/>
    </location>
    <ligand>
        <name>Fe cation</name>
        <dbReference type="ChEBI" id="CHEBI:24875"/>
    </ligand>
</feature>
<feature type="binding site" evidence="1">
    <location>
        <begin position="137"/>
        <end position="141"/>
    </location>
    <ligand>
        <name>substrate</name>
    </ligand>
</feature>
<feature type="binding site" evidence="1">
    <location>
        <position position="170"/>
    </location>
    <ligand>
        <name>substrate</name>
    </ligand>
</feature>
<feature type="binding site" evidence="1">
    <location>
        <position position="183"/>
    </location>
    <ligand>
        <name>substrate</name>
    </ligand>
</feature>
<feature type="binding site" evidence="1">
    <location>
        <position position="281"/>
    </location>
    <ligand>
        <name>substrate</name>
    </ligand>
</feature>
<feature type="binding site" evidence="1">
    <location>
        <position position="309"/>
    </location>
    <ligand>
        <name>Fe cation</name>
        <dbReference type="ChEBI" id="CHEBI:24875"/>
    </ligand>
</feature>
<comment type="function">
    <text evidence="1">Required for the formation of a threonylcarbamoyl group on adenosine at position 37 (t(6)A37) in tRNAs that read codons beginning with adenine. Is involved in the transfer of the threonylcarbamoyl moiety of threonylcarbamoyl-AMP (TC-AMP) to the N6 group of A37, together with TsaE and TsaB. TsaD likely plays a direct catalytic role in this reaction.</text>
</comment>
<comment type="catalytic activity">
    <reaction evidence="1">
        <text>L-threonylcarbamoyladenylate + adenosine(37) in tRNA = N(6)-L-threonylcarbamoyladenosine(37) in tRNA + AMP + H(+)</text>
        <dbReference type="Rhea" id="RHEA:37059"/>
        <dbReference type="Rhea" id="RHEA-COMP:10162"/>
        <dbReference type="Rhea" id="RHEA-COMP:10163"/>
        <dbReference type="ChEBI" id="CHEBI:15378"/>
        <dbReference type="ChEBI" id="CHEBI:73682"/>
        <dbReference type="ChEBI" id="CHEBI:74411"/>
        <dbReference type="ChEBI" id="CHEBI:74418"/>
        <dbReference type="ChEBI" id="CHEBI:456215"/>
        <dbReference type="EC" id="2.3.1.234"/>
    </reaction>
</comment>
<comment type="cofactor">
    <cofactor evidence="1">
        <name>Fe(2+)</name>
        <dbReference type="ChEBI" id="CHEBI:29033"/>
    </cofactor>
    <text evidence="1">Binds 1 Fe(2+) ion per subunit.</text>
</comment>
<comment type="subcellular location">
    <subcellularLocation>
        <location evidence="1">Cytoplasm</location>
    </subcellularLocation>
</comment>
<comment type="similarity">
    <text evidence="1">Belongs to the KAE1 / TsaD family.</text>
</comment>
<reference key="1">
    <citation type="submission" date="2007-12" db="EMBL/GenBank/DDBJ databases">
        <title>Complete sequence of Methylobacterium extorquens PA1.</title>
        <authorList>
            <consortium name="US DOE Joint Genome Institute"/>
            <person name="Copeland A."/>
            <person name="Lucas S."/>
            <person name="Lapidus A."/>
            <person name="Barry K."/>
            <person name="Glavina del Rio T."/>
            <person name="Dalin E."/>
            <person name="Tice H."/>
            <person name="Pitluck S."/>
            <person name="Saunders E."/>
            <person name="Brettin T."/>
            <person name="Bruce D."/>
            <person name="Detter J.C."/>
            <person name="Han C."/>
            <person name="Schmutz J."/>
            <person name="Larimer F."/>
            <person name="Land M."/>
            <person name="Hauser L."/>
            <person name="Kyrpides N."/>
            <person name="Kim E."/>
            <person name="Marx C."/>
            <person name="Richardson P."/>
        </authorList>
    </citation>
    <scope>NUCLEOTIDE SEQUENCE [LARGE SCALE GENOMIC DNA]</scope>
    <source>
        <strain>PA1</strain>
    </source>
</reference>
<name>TSAD_METEP</name>
<evidence type="ECO:0000255" key="1">
    <source>
        <dbReference type="HAMAP-Rule" id="MF_01445"/>
    </source>
</evidence>
<dbReference type="EC" id="2.3.1.234" evidence="1"/>
<dbReference type="EMBL" id="CP000908">
    <property type="protein sequence ID" value="ABY29144.1"/>
    <property type="molecule type" value="Genomic_DNA"/>
</dbReference>
<dbReference type="RefSeq" id="WP_012252470.1">
    <property type="nucleotide sequence ID" value="NC_010172.1"/>
</dbReference>
<dbReference type="SMR" id="A9W0N8"/>
<dbReference type="GeneID" id="72988107"/>
<dbReference type="KEGG" id="mex:Mext_0732"/>
<dbReference type="eggNOG" id="COG0533">
    <property type="taxonomic scope" value="Bacteria"/>
</dbReference>
<dbReference type="HOGENOM" id="CLU_023208_0_2_5"/>
<dbReference type="BioCyc" id="MEXT419610:MEXT_RS03625-MONOMER"/>
<dbReference type="GO" id="GO:0005737">
    <property type="term" value="C:cytoplasm"/>
    <property type="evidence" value="ECO:0007669"/>
    <property type="project" value="UniProtKB-SubCell"/>
</dbReference>
<dbReference type="GO" id="GO:0005506">
    <property type="term" value="F:iron ion binding"/>
    <property type="evidence" value="ECO:0007669"/>
    <property type="project" value="UniProtKB-UniRule"/>
</dbReference>
<dbReference type="GO" id="GO:0061711">
    <property type="term" value="F:N(6)-L-threonylcarbamoyladenine synthase activity"/>
    <property type="evidence" value="ECO:0007669"/>
    <property type="project" value="UniProtKB-EC"/>
</dbReference>
<dbReference type="GO" id="GO:0002949">
    <property type="term" value="P:tRNA threonylcarbamoyladenosine modification"/>
    <property type="evidence" value="ECO:0007669"/>
    <property type="project" value="UniProtKB-UniRule"/>
</dbReference>
<dbReference type="FunFam" id="3.30.420.40:FF:000040">
    <property type="entry name" value="tRNA N6-adenosine threonylcarbamoyltransferase"/>
    <property type="match status" value="1"/>
</dbReference>
<dbReference type="Gene3D" id="3.30.420.40">
    <property type="match status" value="2"/>
</dbReference>
<dbReference type="HAMAP" id="MF_01445">
    <property type="entry name" value="TsaD"/>
    <property type="match status" value="1"/>
</dbReference>
<dbReference type="InterPro" id="IPR043129">
    <property type="entry name" value="ATPase_NBD"/>
</dbReference>
<dbReference type="InterPro" id="IPR000905">
    <property type="entry name" value="Gcp-like_dom"/>
</dbReference>
<dbReference type="InterPro" id="IPR017861">
    <property type="entry name" value="KAE1/TsaD"/>
</dbReference>
<dbReference type="InterPro" id="IPR022450">
    <property type="entry name" value="TsaD"/>
</dbReference>
<dbReference type="NCBIfam" id="TIGR00329">
    <property type="entry name" value="gcp_kae1"/>
    <property type="match status" value="1"/>
</dbReference>
<dbReference type="NCBIfam" id="TIGR03723">
    <property type="entry name" value="T6A_TsaD_YgjD"/>
    <property type="match status" value="1"/>
</dbReference>
<dbReference type="PANTHER" id="PTHR11735">
    <property type="entry name" value="TRNA N6-ADENOSINE THREONYLCARBAMOYLTRANSFERASE"/>
    <property type="match status" value="1"/>
</dbReference>
<dbReference type="PANTHER" id="PTHR11735:SF6">
    <property type="entry name" value="TRNA N6-ADENOSINE THREONYLCARBAMOYLTRANSFERASE, MITOCHONDRIAL"/>
    <property type="match status" value="1"/>
</dbReference>
<dbReference type="Pfam" id="PF00814">
    <property type="entry name" value="TsaD"/>
    <property type="match status" value="1"/>
</dbReference>
<dbReference type="PRINTS" id="PR00789">
    <property type="entry name" value="OSIALOPTASE"/>
</dbReference>
<dbReference type="SUPFAM" id="SSF53067">
    <property type="entry name" value="Actin-like ATPase domain"/>
    <property type="match status" value="2"/>
</dbReference>